<comment type="function">
    <text evidence="5 6 7 8 9">Transcription factor which plays an essential role in virulence by activating the transcription of iron uptake genes such as FRE7 in iron-poor environments such as the host bloodstream and internal organs. Promotes commensalism in a mouse model of gastrointestinal infection.</text>
</comment>
<comment type="subunit">
    <text evidence="9">Interacts with SSN3 and SFU1.</text>
</comment>
<comment type="subcellular location">
    <subcellularLocation>
        <location evidence="9">Cytoplasm</location>
    </subcellularLocation>
    <subcellularLocation>
        <location evidence="2 9">Nucleus</location>
    </subcellularLocation>
    <text>Interaction with SFU1 promotes cytoplasmic localization whereas interaction with SSN3 and subsequent phosphorylation promotes nuclear localization. Nuclear localization is associated with virulence.</text>
</comment>
<comment type="induction">
    <text evidence="4 6 7">Expression is regulated by changes of iron conditions with an increase in low iron. Transcription is negatively regulated by SFU1.</text>
</comment>
<comment type="PTM">
    <text evidence="9">Phosphorylated by SSN3 under iron-depleted conditions which leads to nuclear localization.</text>
</comment>
<accession>Q59UY7</accession>
<accession>A0A1D8PS54</accession>
<name>SEF1_CANAL</name>
<sequence>MKFEKGKVRILPKPSPTPTNPQTPLPLLPAQTKPVNSKRKSAASTPGNESKKSRKSNSTASTPNSATPTSVGTPPQKTSKPTGHRPVTSCTFCRQHKIKCNASDNYPNPCERCKKMGLKCEIDPEFRPRKGSQIQSLKSDVDELKAKIEMLTKNESLLTQALNQHNLNHASQQQQSSGSQSQQQHPPNPQRALSYTSANSSPQVAFSNASPIPSVTSIQQNAPLTHENSDNSPYALNTPENIEELQPISEFILGDVTLPLNRANELHDKFMTTHLPFLPIIISRSATELYHKSQLLFWAVILTASLSEPEPKLYMSLASLIKQLAIETCWIKTPRSTHVIQALIILSIWPLPNEKVLDDCSYRFVGLAKNLSLQLGLHRGGEFIQEFSRNQVSLGPDAERWRTRSWLAVFFCEQFWSSLLGLPPSINTTDYLLENARVDKSLPKNFRCLISLSIFQCKLVNIMGISVTRPDGLLEPSNRAGSLSLLDRELERLRFKLQFEEGGPIEVYYLYIKLMICCFAFLPGTPIEDQVKYVSFAYLSATRIVTIVSKMVNDISLIELPIYIRQAVTYSVFMLFKLHLSRYLIDKYVDSARQSIVTVHRLFRNTLSSWKDLQNDISRTAKVLENLNMVLYNYPEIFLNDSENEDSSIITRMRSHLTASLFYDLVWCVHEARRRSVLDKGKRQAQPNKKILPLPFYNQITKDDFKTITTTSPNGTTITTLVPTDQAMNQAKSKSFDSSKPLEINGIPLPMLEATGSTREVLDSLPSQSLPSQAPTLQQYPMQQDQQQQEPSQQQQQKHSQQSQQYQQQQQSNQQQPHLQHQRQFQQSPPPQFSMISSTPPLQQPPFILANSPLPQTYLPKIDEMNMSPEVKQENSVAPFASQITNFFDQQTSGWFNNDNQDDDFLGWFDVNMMQEK</sequence>
<gene>
    <name type="primary">SEF1</name>
    <name type="ordered locus">CAALFM_CR02190CA</name>
    <name type="ORF">CaO19.11237</name>
    <name type="ORF">CaO19.3753</name>
</gene>
<feature type="chain" id="PRO_0000422808" description="Transcriptional regulatory protein SEF1">
    <location>
        <begin position="1"/>
        <end position="917"/>
    </location>
</feature>
<feature type="DNA-binding region" description="Zn(2)-C6 fungal-type" evidence="2">
    <location>
        <begin position="90"/>
        <end position="120"/>
    </location>
</feature>
<feature type="region of interest" description="Disordered" evidence="3">
    <location>
        <begin position="1"/>
        <end position="88"/>
    </location>
</feature>
<feature type="region of interest" description="Disordered" evidence="3">
    <location>
        <begin position="168"/>
        <end position="212"/>
    </location>
</feature>
<feature type="region of interest" description="Disordered" evidence="3">
    <location>
        <begin position="778"/>
        <end position="849"/>
    </location>
</feature>
<feature type="coiled-coil region" evidence="1">
    <location>
        <begin position="129"/>
        <end position="164"/>
    </location>
</feature>
<feature type="compositionally biased region" description="Pro residues" evidence="3">
    <location>
        <begin position="13"/>
        <end position="27"/>
    </location>
</feature>
<feature type="compositionally biased region" description="Low complexity" evidence="3">
    <location>
        <begin position="56"/>
        <end position="70"/>
    </location>
</feature>
<feature type="compositionally biased region" description="Polar residues" evidence="3">
    <location>
        <begin position="71"/>
        <end position="81"/>
    </location>
</feature>
<feature type="compositionally biased region" description="Low complexity" evidence="3">
    <location>
        <begin position="171"/>
        <end position="184"/>
    </location>
</feature>
<feature type="compositionally biased region" description="Polar residues" evidence="3">
    <location>
        <begin position="191"/>
        <end position="212"/>
    </location>
</feature>
<feature type="compositionally biased region" description="Low complexity" evidence="3">
    <location>
        <begin position="778"/>
        <end position="827"/>
    </location>
</feature>
<reference key="1">
    <citation type="journal article" date="2004" name="Proc. Natl. Acad. Sci. U.S.A.">
        <title>The diploid genome sequence of Candida albicans.</title>
        <authorList>
            <person name="Jones T."/>
            <person name="Federspiel N.A."/>
            <person name="Chibana H."/>
            <person name="Dungan J."/>
            <person name="Kalman S."/>
            <person name="Magee B.B."/>
            <person name="Newport G."/>
            <person name="Thorstenson Y.R."/>
            <person name="Agabian N."/>
            <person name="Magee P.T."/>
            <person name="Davis R.W."/>
            <person name="Scherer S."/>
        </authorList>
    </citation>
    <scope>NUCLEOTIDE SEQUENCE [LARGE SCALE GENOMIC DNA]</scope>
    <source>
        <strain>SC5314 / ATCC MYA-2876</strain>
    </source>
</reference>
<reference key="2">
    <citation type="journal article" date="2007" name="Genome Biol.">
        <title>Assembly of the Candida albicans genome into sixteen supercontigs aligned on the eight chromosomes.</title>
        <authorList>
            <person name="van het Hoog M."/>
            <person name="Rast T.J."/>
            <person name="Martchenko M."/>
            <person name="Grindle S."/>
            <person name="Dignard D."/>
            <person name="Hogues H."/>
            <person name="Cuomo C."/>
            <person name="Berriman M."/>
            <person name="Scherer S."/>
            <person name="Magee B.B."/>
            <person name="Whiteway M."/>
            <person name="Chibana H."/>
            <person name="Nantel A."/>
            <person name="Magee P.T."/>
        </authorList>
    </citation>
    <scope>GENOME REANNOTATION</scope>
    <source>
        <strain>SC5314 / ATCC MYA-2876</strain>
    </source>
</reference>
<reference key="3">
    <citation type="journal article" date="2013" name="Genome Biol.">
        <title>Assembly of a phased diploid Candida albicans genome facilitates allele-specific measurements and provides a simple model for repeat and indel structure.</title>
        <authorList>
            <person name="Muzzey D."/>
            <person name="Schwartz K."/>
            <person name="Weissman J.S."/>
            <person name="Sherlock G."/>
        </authorList>
    </citation>
    <scope>NUCLEOTIDE SEQUENCE [LARGE SCALE GENOMIC DNA]</scope>
    <scope>GENOME REANNOTATION</scope>
    <source>
        <strain>SC5314 / ATCC MYA-2876</strain>
    </source>
</reference>
<reference key="4">
    <citation type="journal article" date="2004" name="Mol. Microbiol.">
        <title>Regulatory networks affected by iron availability in Candida albicans.</title>
        <authorList>
            <person name="Lan C.Y."/>
            <person name="Rodarte G."/>
            <person name="Murillo L.A."/>
            <person name="Jones T."/>
            <person name="Davis R.W."/>
            <person name="Dungan J."/>
            <person name="Newport G."/>
            <person name="Agabian N."/>
        </authorList>
    </citation>
    <scope>INDUCTION</scope>
</reference>
<reference key="5">
    <citation type="journal article" date="2005" name="Comp. Funct. Genomics">
        <title>In silico analysis for transcription factors with Zn(II)(2)C(6) binuclear cluster DNA-binding domains in Candida albicans.</title>
        <authorList>
            <person name="Maicas S."/>
            <person name="Moreno I."/>
            <person name="Nieto A."/>
            <person name="Gomez M."/>
            <person name="Sentandreu R."/>
            <person name="Valentin E."/>
        </authorList>
    </citation>
    <scope>DOMAIN</scope>
</reference>
<reference key="6">
    <citation type="journal article" date="2009" name="PLoS Genet.">
        <title>A phenotypic profile of the Candida albicans regulatory network.</title>
        <authorList>
            <person name="Homann O.R."/>
            <person name="Dea J."/>
            <person name="Noble S.M."/>
            <person name="Johnson A.D."/>
        </authorList>
    </citation>
    <scope>FUNCTION</scope>
</reference>
<reference key="7">
    <citation type="journal article" date="2010" name="BMC Syst. Biol.">
        <title>Regulatory network modelling of iron acquisition by a fungal pathogen in contact with epithelial cells.</title>
        <authorList>
            <person name="Linde J."/>
            <person name="Wilson D."/>
            <person name="Hube B."/>
            <person name="Guthke R."/>
        </authorList>
    </citation>
    <scope>FUNCTION</scope>
    <scope>INDUCTION</scope>
</reference>
<reference key="8">
    <citation type="journal article" date="2011" name="Cell Host Microbe">
        <title>An iron homeostasis regulatory circuit with reciprocal roles in Candida albicans commensalism and pathogenesis.</title>
        <authorList>
            <person name="Chen C."/>
            <person name="Pande K."/>
            <person name="French S.D."/>
            <person name="Tuch B.B."/>
            <person name="Noble S.M."/>
        </authorList>
    </citation>
    <scope>FUNCTION</scope>
    <scope>DNA-BINDING</scope>
    <scope>INDUCTION</scope>
</reference>
<reference key="9">
    <citation type="journal article" date="2011" name="PLoS ONE">
        <title>In vivo systematic analysis of Candida albicans Zn2-Cys6 transcription factors mutants for mice organ colonization.</title>
        <authorList>
            <person name="Vandeputte P."/>
            <person name="Ischer F."/>
            <person name="Sanglard D."/>
            <person name="Coste A.T."/>
        </authorList>
    </citation>
    <scope>FUNCTION IN VIRULENCE</scope>
</reference>
<reference key="10">
    <citation type="journal article" date="2012" name="PLoS Pathog.">
        <title>Post-transcriptional regulation of the Sef1 transcription factor controls the virulence of Candida albicans in its mammalian host.</title>
        <authorList>
            <person name="Chen C."/>
            <person name="Noble S.M."/>
        </authorList>
    </citation>
    <scope>FUNCTION</scope>
    <scope>SUBCELLULAR LOCATION</scope>
    <scope>PHOSPHORYLATION BY SSN3</scope>
    <scope>INTERACTION WITH SSN3 AND SFU1</scope>
</reference>
<dbReference type="EMBL" id="CP017630">
    <property type="protein sequence ID" value="AOW30969.1"/>
    <property type="molecule type" value="Genomic_DNA"/>
</dbReference>
<dbReference type="RefSeq" id="XP_713441.1">
    <property type="nucleotide sequence ID" value="XM_708348.2"/>
</dbReference>
<dbReference type="SMR" id="Q59UY7"/>
<dbReference type="BioGRID" id="1228003">
    <property type="interactions" value="3"/>
</dbReference>
<dbReference type="FunCoup" id="Q59UY7">
    <property type="interactions" value="117"/>
</dbReference>
<dbReference type="STRING" id="237561.Q59UY7"/>
<dbReference type="EnsemblFungi" id="CR_02190C_A-T">
    <property type="protein sequence ID" value="CR_02190C_A-T-p1"/>
    <property type="gene ID" value="CR_02190C_A"/>
</dbReference>
<dbReference type="GeneID" id="3644945"/>
<dbReference type="KEGG" id="cal:CAALFM_CR02190CA"/>
<dbReference type="CGD" id="CAL0000189760">
    <property type="gene designation" value="SEF1"/>
</dbReference>
<dbReference type="VEuPathDB" id="FungiDB:CR_02190C_A"/>
<dbReference type="eggNOG" id="ENOG502QR4T">
    <property type="taxonomic scope" value="Eukaryota"/>
</dbReference>
<dbReference type="HOGENOM" id="CLU_010150_0_0_1"/>
<dbReference type="InParanoid" id="Q59UY7"/>
<dbReference type="OMA" id="LVWCVHE"/>
<dbReference type="OrthoDB" id="3163292at2759"/>
<dbReference type="PHI-base" id="PHI:2617"/>
<dbReference type="PRO" id="PR:Q59UY7"/>
<dbReference type="Proteomes" id="UP000000559">
    <property type="component" value="Chromosome R"/>
</dbReference>
<dbReference type="GO" id="GO:0005737">
    <property type="term" value="C:cytoplasm"/>
    <property type="evidence" value="ECO:0000314"/>
    <property type="project" value="CGD"/>
</dbReference>
<dbReference type="GO" id="GO:0005634">
    <property type="term" value="C:nucleus"/>
    <property type="evidence" value="ECO:0000314"/>
    <property type="project" value="CGD"/>
</dbReference>
<dbReference type="GO" id="GO:0001216">
    <property type="term" value="F:DNA-binding transcription activator activity"/>
    <property type="evidence" value="ECO:0000315"/>
    <property type="project" value="CGD"/>
</dbReference>
<dbReference type="GO" id="GO:0000981">
    <property type="term" value="F:DNA-binding transcription factor activity, RNA polymerase II-specific"/>
    <property type="evidence" value="ECO:0000318"/>
    <property type="project" value="GO_Central"/>
</dbReference>
<dbReference type="GO" id="GO:0000976">
    <property type="term" value="F:transcription cis-regulatory region binding"/>
    <property type="evidence" value="ECO:0000314"/>
    <property type="project" value="CGD"/>
</dbReference>
<dbReference type="GO" id="GO:0008270">
    <property type="term" value="F:zinc ion binding"/>
    <property type="evidence" value="ECO:0007669"/>
    <property type="project" value="InterPro"/>
</dbReference>
<dbReference type="GO" id="GO:0051701">
    <property type="term" value="P:biological process involved in interaction with host"/>
    <property type="evidence" value="ECO:0000315"/>
    <property type="project" value="CGD"/>
</dbReference>
<dbReference type="GO" id="GO:0071469">
    <property type="term" value="P:cellular response to alkaline pH"/>
    <property type="evidence" value="ECO:0000315"/>
    <property type="project" value="CGD"/>
</dbReference>
<dbReference type="GO" id="GO:0006281">
    <property type="term" value="P:DNA repair"/>
    <property type="evidence" value="ECO:0000315"/>
    <property type="project" value="CGD"/>
</dbReference>
<dbReference type="GO" id="GO:0006351">
    <property type="term" value="P:DNA-templated transcription"/>
    <property type="evidence" value="ECO:0000315"/>
    <property type="project" value="CGD"/>
</dbReference>
<dbReference type="GO" id="GO:0030447">
    <property type="term" value="P:filamentous growth"/>
    <property type="evidence" value="ECO:0000315"/>
    <property type="project" value="CGD"/>
</dbReference>
<dbReference type="GO" id="GO:0006879">
    <property type="term" value="P:intracellular iron ion homeostasis"/>
    <property type="evidence" value="ECO:0000315"/>
    <property type="project" value="CGD"/>
</dbReference>
<dbReference type="GO" id="GO:1900445">
    <property type="term" value="P:positive regulation of filamentous growth of a population of unicellular organisms in response to biotic stimulus"/>
    <property type="evidence" value="ECO:0000315"/>
    <property type="project" value="CGD"/>
</dbReference>
<dbReference type="GO" id="GO:1901966">
    <property type="term" value="P:regulation of cellular response to iron ion starvation"/>
    <property type="evidence" value="ECO:0000315"/>
    <property type="project" value="CGD"/>
</dbReference>
<dbReference type="GO" id="GO:0006355">
    <property type="term" value="P:regulation of DNA-templated transcription"/>
    <property type="evidence" value="ECO:0000318"/>
    <property type="project" value="GO_Central"/>
</dbReference>
<dbReference type="CDD" id="cd12148">
    <property type="entry name" value="fungal_TF_MHR"/>
    <property type="match status" value="1"/>
</dbReference>
<dbReference type="CDD" id="cd00067">
    <property type="entry name" value="GAL4"/>
    <property type="match status" value="1"/>
</dbReference>
<dbReference type="FunFam" id="4.10.240.10:FF:000003">
    <property type="entry name" value="C6 transcription factor (Leu3)"/>
    <property type="match status" value="1"/>
</dbReference>
<dbReference type="Gene3D" id="4.10.240.10">
    <property type="entry name" value="Zn(2)-C6 fungal-type DNA-binding domain"/>
    <property type="match status" value="1"/>
</dbReference>
<dbReference type="InterPro" id="IPR051089">
    <property type="entry name" value="prtT"/>
</dbReference>
<dbReference type="InterPro" id="IPR007219">
    <property type="entry name" value="Transcription_factor_dom_fun"/>
</dbReference>
<dbReference type="InterPro" id="IPR036864">
    <property type="entry name" value="Zn2-C6_fun-type_DNA-bd_sf"/>
</dbReference>
<dbReference type="InterPro" id="IPR001138">
    <property type="entry name" value="Zn2Cys6_DnaBD"/>
</dbReference>
<dbReference type="PANTHER" id="PTHR31845">
    <property type="entry name" value="FINGER DOMAIN PROTEIN, PUTATIVE-RELATED"/>
    <property type="match status" value="1"/>
</dbReference>
<dbReference type="PANTHER" id="PTHR31845:SF6">
    <property type="entry name" value="TRANSCRIPTION FACTOR SEF1-RELATED"/>
    <property type="match status" value="1"/>
</dbReference>
<dbReference type="Pfam" id="PF04082">
    <property type="entry name" value="Fungal_trans"/>
    <property type="match status" value="1"/>
</dbReference>
<dbReference type="Pfam" id="PF00172">
    <property type="entry name" value="Zn_clus"/>
    <property type="match status" value="1"/>
</dbReference>
<dbReference type="SMART" id="SM00066">
    <property type="entry name" value="GAL4"/>
    <property type="match status" value="1"/>
</dbReference>
<dbReference type="SUPFAM" id="SSF57701">
    <property type="entry name" value="Zn2/Cys6 DNA-binding domain"/>
    <property type="match status" value="1"/>
</dbReference>
<dbReference type="PROSITE" id="PS00463">
    <property type="entry name" value="ZN2_CY6_FUNGAL_1"/>
    <property type="match status" value="1"/>
</dbReference>
<dbReference type="PROSITE" id="PS50048">
    <property type="entry name" value="ZN2_CY6_FUNGAL_2"/>
    <property type="match status" value="1"/>
</dbReference>
<proteinExistence type="evidence at protein level"/>
<keyword id="KW-0175">Coiled coil</keyword>
<keyword id="KW-0963">Cytoplasm</keyword>
<keyword id="KW-0238">DNA-binding</keyword>
<keyword id="KW-0408">Iron</keyword>
<keyword id="KW-0479">Metal-binding</keyword>
<keyword id="KW-0539">Nucleus</keyword>
<keyword id="KW-0597">Phosphoprotein</keyword>
<keyword id="KW-1185">Reference proteome</keyword>
<keyword id="KW-0804">Transcription</keyword>
<keyword id="KW-0805">Transcription regulation</keyword>
<keyword id="KW-0843">Virulence</keyword>
<keyword id="KW-0862">Zinc</keyword>
<evidence type="ECO:0000255" key="1"/>
<evidence type="ECO:0000255" key="2">
    <source>
        <dbReference type="PROSITE-ProRule" id="PRU00227"/>
    </source>
</evidence>
<evidence type="ECO:0000256" key="3">
    <source>
        <dbReference type="SAM" id="MobiDB-lite"/>
    </source>
</evidence>
<evidence type="ECO:0000269" key="4">
    <source>
    </source>
</evidence>
<evidence type="ECO:0000269" key="5">
    <source>
    </source>
</evidence>
<evidence type="ECO:0000269" key="6">
    <source>
    </source>
</evidence>
<evidence type="ECO:0000269" key="7">
    <source>
    </source>
</evidence>
<evidence type="ECO:0000269" key="8">
    <source>
    </source>
</evidence>
<evidence type="ECO:0000269" key="9">
    <source>
    </source>
</evidence>
<organism>
    <name type="scientific">Candida albicans (strain SC5314 / ATCC MYA-2876)</name>
    <name type="common">Yeast</name>
    <dbReference type="NCBI Taxonomy" id="237561"/>
    <lineage>
        <taxon>Eukaryota</taxon>
        <taxon>Fungi</taxon>
        <taxon>Dikarya</taxon>
        <taxon>Ascomycota</taxon>
        <taxon>Saccharomycotina</taxon>
        <taxon>Pichiomycetes</taxon>
        <taxon>Debaryomycetaceae</taxon>
        <taxon>Candida/Lodderomyces clade</taxon>
        <taxon>Candida</taxon>
    </lineage>
</organism>
<protein>
    <recommendedName>
        <fullName>Transcriptional regulatory protein SEF1</fullName>
    </recommendedName>
</protein>